<sequence length="434" mass="47103">MSIITDVYAREVLDSRGNPTLEVEVYTESGAFGRGMVPSGASTGEHEAVELRDGDKSRYGGLGTQKAVDNVNNIIAEAIIGYDVRDQQAIDRAMIALDGTPNKGKLGANAILGVSIAVARAAADYLEIPLYSYLGGFNTKVLPTPMMNIINGGSHSDAPIAFQEFMILPVGAPTFKEALRYGAEIFHALKKILKSRGLETAVGDEGGFAPRFEGTEDGVETILAAIEAAGYVPGKDVFIGFDCASSEFYDKERKVYDYTKFEGEGAAVRTSAEQIDYLEELVNKYPIITIEDGMDENDWDGWKALTERLGKKVQLVGDDFFVTNTDYLARGIQEGAANSILIKVNQIGTLTETFEAIEMAKEAGYTAVVSHRSGETEDSTIADIAVATNAGQIKTGSLSRTDRIAKYNQLLRIEDQLGEVAEYRGLKSFYNLKK</sequence>
<protein>
    <recommendedName>
        <fullName evidence="1">Enolase</fullName>
        <ecNumber evidence="1">4.2.1.11</ecNumber>
    </recommendedName>
    <alternativeName>
        <fullName evidence="1">2-phospho-D-glycerate hydro-lyase</fullName>
    </alternativeName>
    <alternativeName>
        <fullName evidence="1">2-phosphoglycerate dehydratase</fullName>
    </alternativeName>
</protein>
<name>ENO_STRP4</name>
<comment type="function">
    <text evidence="1">Catalyzes the reversible conversion of 2-phosphoglycerate (2-PG) into phosphoenolpyruvate (PEP). It is essential for the degradation of carbohydrates via glycolysis.</text>
</comment>
<comment type="catalytic activity">
    <reaction evidence="1">
        <text>(2R)-2-phosphoglycerate = phosphoenolpyruvate + H2O</text>
        <dbReference type="Rhea" id="RHEA:10164"/>
        <dbReference type="ChEBI" id="CHEBI:15377"/>
        <dbReference type="ChEBI" id="CHEBI:58289"/>
        <dbReference type="ChEBI" id="CHEBI:58702"/>
        <dbReference type="EC" id="4.2.1.11"/>
    </reaction>
</comment>
<comment type="cofactor">
    <cofactor evidence="1">
        <name>Mg(2+)</name>
        <dbReference type="ChEBI" id="CHEBI:18420"/>
    </cofactor>
    <text evidence="1">Binds a second Mg(2+) ion via substrate during catalysis.</text>
</comment>
<comment type="pathway">
    <text evidence="1">Carbohydrate degradation; glycolysis; pyruvate from D-glyceraldehyde 3-phosphate: step 4/5.</text>
</comment>
<comment type="subcellular location">
    <subcellularLocation>
        <location evidence="1">Cytoplasm</location>
    </subcellularLocation>
    <subcellularLocation>
        <location evidence="1">Secreted</location>
    </subcellularLocation>
    <subcellularLocation>
        <location evidence="1">Cell surface</location>
    </subcellularLocation>
    <text evidence="1">Fractions of enolase are present in both the cytoplasm and on the cell surface.</text>
</comment>
<comment type="similarity">
    <text evidence="1">Belongs to the enolase family.</text>
</comment>
<evidence type="ECO:0000255" key="1">
    <source>
        <dbReference type="HAMAP-Rule" id="MF_00318"/>
    </source>
</evidence>
<feature type="chain" id="PRO_1000115919" description="Enolase">
    <location>
        <begin position="1"/>
        <end position="434"/>
    </location>
</feature>
<feature type="active site" description="Proton donor" evidence="1">
    <location>
        <position position="205"/>
    </location>
</feature>
<feature type="active site" description="Proton acceptor" evidence="1">
    <location>
        <position position="343"/>
    </location>
</feature>
<feature type="binding site" evidence="1">
    <location>
        <position position="163"/>
    </location>
    <ligand>
        <name>(2R)-2-phosphoglycerate</name>
        <dbReference type="ChEBI" id="CHEBI:58289"/>
    </ligand>
</feature>
<feature type="binding site" evidence="1">
    <location>
        <position position="242"/>
    </location>
    <ligand>
        <name>Mg(2+)</name>
        <dbReference type="ChEBI" id="CHEBI:18420"/>
    </ligand>
</feature>
<feature type="binding site" evidence="1">
    <location>
        <position position="291"/>
    </location>
    <ligand>
        <name>Mg(2+)</name>
        <dbReference type="ChEBI" id="CHEBI:18420"/>
    </ligand>
</feature>
<feature type="binding site" evidence="1">
    <location>
        <position position="318"/>
    </location>
    <ligand>
        <name>Mg(2+)</name>
        <dbReference type="ChEBI" id="CHEBI:18420"/>
    </ligand>
</feature>
<feature type="binding site" evidence="1">
    <location>
        <position position="343"/>
    </location>
    <ligand>
        <name>(2R)-2-phosphoglycerate</name>
        <dbReference type="ChEBI" id="CHEBI:58289"/>
    </ligand>
</feature>
<feature type="binding site" evidence="1">
    <location>
        <position position="372"/>
    </location>
    <ligand>
        <name>(2R)-2-phosphoglycerate</name>
        <dbReference type="ChEBI" id="CHEBI:58289"/>
    </ligand>
</feature>
<feature type="binding site" evidence="1">
    <location>
        <position position="373"/>
    </location>
    <ligand>
        <name>(2R)-2-phosphoglycerate</name>
        <dbReference type="ChEBI" id="CHEBI:58289"/>
    </ligand>
</feature>
<feature type="binding site" evidence="1">
    <location>
        <position position="394"/>
    </location>
    <ligand>
        <name>(2R)-2-phosphoglycerate</name>
        <dbReference type="ChEBI" id="CHEBI:58289"/>
    </ligand>
</feature>
<organism>
    <name type="scientific">Streptococcus pneumoniae serotype 19F (strain G54)</name>
    <dbReference type="NCBI Taxonomy" id="512566"/>
    <lineage>
        <taxon>Bacteria</taxon>
        <taxon>Bacillati</taxon>
        <taxon>Bacillota</taxon>
        <taxon>Bacilli</taxon>
        <taxon>Lactobacillales</taxon>
        <taxon>Streptococcaceae</taxon>
        <taxon>Streptococcus</taxon>
    </lineage>
</organism>
<reference key="1">
    <citation type="journal article" date="2001" name="Microb. Drug Resist.">
        <title>Annotated draft genomic sequence from a Streptococcus pneumoniae type 19F clinical isolate.</title>
        <authorList>
            <person name="Dopazo J."/>
            <person name="Mendoza A."/>
            <person name="Herrero J."/>
            <person name="Caldara F."/>
            <person name="Humbert Y."/>
            <person name="Friedli L."/>
            <person name="Guerrier M."/>
            <person name="Grand-Schenk E."/>
            <person name="Gandin C."/>
            <person name="de Francesco M."/>
            <person name="Polissi A."/>
            <person name="Buell G."/>
            <person name="Feger G."/>
            <person name="Garcia E."/>
            <person name="Peitsch M."/>
            <person name="Garcia-Bustos J.F."/>
        </authorList>
    </citation>
    <scope>NUCLEOTIDE SEQUENCE [LARGE SCALE GENOMIC DNA]</scope>
    <source>
        <strain>G54</strain>
    </source>
</reference>
<reference key="2">
    <citation type="submission" date="2008-03" db="EMBL/GenBank/DDBJ databases">
        <title>Pneumococcal beta glucoside metabolism investigated by whole genome comparison.</title>
        <authorList>
            <person name="Mulas L."/>
            <person name="Trappetti C."/>
            <person name="Hakenbeck R."/>
            <person name="Iannelli F."/>
            <person name="Pozzi G."/>
            <person name="Davidsen T.M."/>
            <person name="Tettelin H."/>
            <person name="Oggioni M."/>
        </authorList>
    </citation>
    <scope>NUCLEOTIDE SEQUENCE [LARGE SCALE GENOMIC DNA]</scope>
    <source>
        <strain>G54</strain>
    </source>
</reference>
<accession>B5E4P1</accession>
<gene>
    <name evidence="1" type="primary">eno</name>
    <name type="ordered locus">SPG_1047</name>
</gene>
<dbReference type="EC" id="4.2.1.11" evidence="1"/>
<dbReference type="EMBL" id="CP001015">
    <property type="protein sequence ID" value="ACF56025.1"/>
    <property type="molecule type" value="Genomic_DNA"/>
</dbReference>
<dbReference type="SMR" id="B5E4P1"/>
<dbReference type="KEGG" id="spx:SPG_1047"/>
<dbReference type="HOGENOM" id="CLU_031223_2_1_9"/>
<dbReference type="UniPathway" id="UPA00109">
    <property type="reaction ID" value="UER00187"/>
</dbReference>
<dbReference type="GO" id="GO:0009986">
    <property type="term" value="C:cell surface"/>
    <property type="evidence" value="ECO:0007669"/>
    <property type="project" value="UniProtKB-SubCell"/>
</dbReference>
<dbReference type="GO" id="GO:0005576">
    <property type="term" value="C:extracellular region"/>
    <property type="evidence" value="ECO:0007669"/>
    <property type="project" value="UniProtKB-SubCell"/>
</dbReference>
<dbReference type="GO" id="GO:0009274">
    <property type="term" value="C:peptidoglycan-based cell wall"/>
    <property type="evidence" value="ECO:0007669"/>
    <property type="project" value="UniProtKB-ARBA"/>
</dbReference>
<dbReference type="GO" id="GO:0000015">
    <property type="term" value="C:phosphopyruvate hydratase complex"/>
    <property type="evidence" value="ECO:0007669"/>
    <property type="project" value="InterPro"/>
</dbReference>
<dbReference type="GO" id="GO:0000287">
    <property type="term" value="F:magnesium ion binding"/>
    <property type="evidence" value="ECO:0007669"/>
    <property type="project" value="UniProtKB-UniRule"/>
</dbReference>
<dbReference type="GO" id="GO:0004634">
    <property type="term" value="F:phosphopyruvate hydratase activity"/>
    <property type="evidence" value="ECO:0007669"/>
    <property type="project" value="UniProtKB-UniRule"/>
</dbReference>
<dbReference type="GO" id="GO:0006096">
    <property type="term" value="P:glycolytic process"/>
    <property type="evidence" value="ECO:0007669"/>
    <property type="project" value="UniProtKB-UniRule"/>
</dbReference>
<dbReference type="CDD" id="cd03313">
    <property type="entry name" value="enolase"/>
    <property type="match status" value="1"/>
</dbReference>
<dbReference type="FunFam" id="3.20.20.120:FF:000001">
    <property type="entry name" value="Enolase"/>
    <property type="match status" value="1"/>
</dbReference>
<dbReference type="FunFam" id="3.30.390.10:FF:000001">
    <property type="entry name" value="Enolase"/>
    <property type="match status" value="1"/>
</dbReference>
<dbReference type="Gene3D" id="3.20.20.120">
    <property type="entry name" value="Enolase-like C-terminal domain"/>
    <property type="match status" value="1"/>
</dbReference>
<dbReference type="Gene3D" id="3.30.390.10">
    <property type="entry name" value="Enolase-like, N-terminal domain"/>
    <property type="match status" value="1"/>
</dbReference>
<dbReference type="HAMAP" id="MF_00318">
    <property type="entry name" value="Enolase"/>
    <property type="match status" value="1"/>
</dbReference>
<dbReference type="InterPro" id="IPR000941">
    <property type="entry name" value="Enolase"/>
</dbReference>
<dbReference type="InterPro" id="IPR036849">
    <property type="entry name" value="Enolase-like_C_sf"/>
</dbReference>
<dbReference type="InterPro" id="IPR029017">
    <property type="entry name" value="Enolase-like_N"/>
</dbReference>
<dbReference type="InterPro" id="IPR020810">
    <property type="entry name" value="Enolase_C"/>
</dbReference>
<dbReference type="InterPro" id="IPR020809">
    <property type="entry name" value="Enolase_CS"/>
</dbReference>
<dbReference type="InterPro" id="IPR020811">
    <property type="entry name" value="Enolase_N"/>
</dbReference>
<dbReference type="NCBIfam" id="TIGR01060">
    <property type="entry name" value="eno"/>
    <property type="match status" value="1"/>
</dbReference>
<dbReference type="PANTHER" id="PTHR11902">
    <property type="entry name" value="ENOLASE"/>
    <property type="match status" value="1"/>
</dbReference>
<dbReference type="PANTHER" id="PTHR11902:SF1">
    <property type="entry name" value="ENOLASE"/>
    <property type="match status" value="1"/>
</dbReference>
<dbReference type="Pfam" id="PF00113">
    <property type="entry name" value="Enolase_C"/>
    <property type="match status" value="1"/>
</dbReference>
<dbReference type="Pfam" id="PF03952">
    <property type="entry name" value="Enolase_N"/>
    <property type="match status" value="1"/>
</dbReference>
<dbReference type="PIRSF" id="PIRSF001400">
    <property type="entry name" value="Enolase"/>
    <property type="match status" value="1"/>
</dbReference>
<dbReference type="PRINTS" id="PR00148">
    <property type="entry name" value="ENOLASE"/>
</dbReference>
<dbReference type="SFLD" id="SFLDS00001">
    <property type="entry name" value="Enolase"/>
    <property type="match status" value="1"/>
</dbReference>
<dbReference type="SFLD" id="SFLDF00002">
    <property type="entry name" value="enolase"/>
    <property type="match status" value="1"/>
</dbReference>
<dbReference type="SMART" id="SM01192">
    <property type="entry name" value="Enolase_C"/>
    <property type="match status" value="1"/>
</dbReference>
<dbReference type="SMART" id="SM01193">
    <property type="entry name" value="Enolase_N"/>
    <property type="match status" value="1"/>
</dbReference>
<dbReference type="SUPFAM" id="SSF51604">
    <property type="entry name" value="Enolase C-terminal domain-like"/>
    <property type="match status" value="1"/>
</dbReference>
<dbReference type="SUPFAM" id="SSF54826">
    <property type="entry name" value="Enolase N-terminal domain-like"/>
    <property type="match status" value="1"/>
</dbReference>
<dbReference type="PROSITE" id="PS00164">
    <property type="entry name" value="ENOLASE"/>
    <property type="match status" value="1"/>
</dbReference>
<proteinExistence type="inferred from homology"/>
<keyword id="KW-0963">Cytoplasm</keyword>
<keyword id="KW-0324">Glycolysis</keyword>
<keyword id="KW-0456">Lyase</keyword>
<keyword id="KW-0460">Magnesium</keyword>
<keyword id="KW-0479">Metal-binding</keyword>
<keyword id="KW-0964">Secreted</keyword>